<proteinExistence type="evidence at transcript level"/>
<reference key="1">
    <citation type="submission" date="2004-05" db="EMBL/GenBank/DDBJ databases">
        <title>Characterization of porcine melanoma antigen, family D, 1 (MAGED1).</title>
        <authorList>
            <person name="Kim J.G."/>
            <person name="Vallet J.L."/>
            <person name="Nonneman D."/>
            <person name="Christenson R.K."/>
        </authorList>
    </citation>
    <scope>NUCLEOTIDE SEQUENCE [MRNA]</scope>
</reference>
<organism>
    <name type="scientific">Sus scrofa</name>
    <name type="common">Pig</name>
    <dbReference type="NCBI Taxonomy" id="9823"/>
    <lineage>
        <taxon>Eukaryota</taxon>
        <taxon>Metazoa</taxon>
        <taxon>Chordata</taxon>
        <taxon>Craniata</taxon>
        <taxon>Vertebrata</taxon>
        <taxon>Euteleostomi</taxon>
        <taxon>Mammalia</taxon>
        <taxon>Eutheria</taxon>
        <taxon>Laurasiatheria</taxon>
        <taxon>Artiodactyla</taxon>
        <taxon>Suina</taxon>
        <taxon>Suidae</taxon>
        <taxon>Sus</taxon>
    </lineage>
</organism>
<evidence type="ECO:0000250" key="1"/>
<evidence type="ECO:0000250" key="2">
    <source>
        <dbReference type="UniProtKB" id="Q9Y5V3"/>
    </source>
</evidence>
<evidence type="ECO:0000255" key="3">
    <source>
        <dbReference type="PROSITE-ProRule" id="PRU00127"/>
    </source>
</evidence>
<evidence type="ECO:0000256" key="4">
    <source>
        <dbReference type="SAM" id="MobiDB-lite"/>
    </source>
</evidence>
<comment type="function">
    <text evidence="1">Involved in the apoptotic response after nerve growth factor (NGF) binding in neuronal cells. Inhibits cell cycle progression, and facilitates NGFR-mediated apoptosis. May act as a regulator of the function of DLX family members. May enhance ubiquitin ligase activity of RING-type zinc finger-containing E3 ubiquitin-protein ligases. Proposed to act through recruitment and/or stabilization of the Ubl-conjugating enzyme (E2) at the E3:substrate complex. Plays a role in the circadian rhythm regulation. May act as RORA co-regulator, modulating the expression of core clock genes such as BMAL1 and NFIL3, induced, or NR1D1, repressed (By similarity).</text>
</comment>
<comment type="subunit">
    <text evidence="1">Interacts with DLX5, DLX7 and MSX2 and forms homomultimers. Interacts with UNC5A. Interacts with TRIM28 and PJA1. Interacts with NGFR/p75NTR and RORA (By similarity).</text>
</comment>
<comment type="subcellular location">
    <subcellularLocation>
        <location evidence="1">Cytoplasm</location>
    </subcellularLocation>
    <subcellularLocation>
        <location evidence="1">Cell membrane</location>
        <topology evidence="1">Peripheral membrane protein</topology>
    </subcellularLocation>
    <subcellularLocation>
        <location evidence="1">Nucleus</location>
    </subcellularLocation>
    <text evidence="1">Expression shifts from the cytoplasm to the plasma membrane upon stimulation with NGF.</text>
</comment>
<name>MAGD1_PIG</name>
<keyword id="KW-0090">Biological rhythms</keyword>
<keyword id="KW-1003">Cell membrane</keyword>
<keyword id="KW-0963">Cytoplasm</keyword>
<keyword id="KW-0472">Membrane</keyword>
<keyword id="KW-0539">Nucleus</keyword>
<keyword id="KW-0597">Phosphoprotein</keyword>
<keyword id="KW-1185">Reference proteome</keyword>
<keyword id="KW-0677">Repeat</keyword>
<keyword id="KW-0825">Tumor antigen</keyword>
<keyword id="KW-0833">Ubl conjugation pathway</keyword>
<accession>Q6ITT4</accession>
<dbReference type="EMBL" id="AY626238">
    <property type="protein sequence ID" value="AAT45729.1"/>
    <property type="molecule type" value="mRNA"/>
</dbReference>
<dbReference type="RefSeq" id="NP_001001860.1">
    <property type="nucleotide sequence ID" value="NM_001001860.1"/>
</dbReference>
<dbReference type="RefSeq" id="XP_005673678.1">
    <property type="nucleotide sequence ID" value="XM_005673621.3"/>
</dbReference>
<dbReference type="RefSeq" id="XP_013841594.1">
    <property type="nucleotide sequence ID" value="XM_013986140.2"/>
</dbReference>
<dbReference type="RefSeq" id="XP_013841595.1">
    <property type="nucleotide sequence ID" value="XM_013986141.1"/>
</dbReference>
<dbReference type="SMR" id="Q6ITT4"/>
<dbReference type="FunCoup" id="Q6ITT4">
    <property type="interactions" value="287"/>
</dbReference>
<dbReference type="STRING" id="9823.ENSSSCP00000013109"/>
<dbReference type="PaxDb" id="9823-ENSSSCP00000013109"/>
<dbReference type="Ensembl" id="ENSSSCT00000013469.6">
    <property type="protein sequence ID" value="ENSSSCP00000013109.4"/>
    <property type="gene ID" value="ENSSSCG00000012318.6"/>
</dbReference>
<dbReference type="Ensembl" id="ENSSSCT00015068560.1">
    <property type="protein sequence ID" value="ENSSSCP00015027455.1"/>
    <property type="gene ID" value="ENSSSCG00015051346.1"/>
</dbReference>
<dbReference type="Ensembl" id="ENSSSCT00025055330.1">
    <property type="protein sequence ID" value="ENSSSCP00025023502.1"/>
    <property type="gene ID" value="ENSSSCG00025040739.1"/>
</dbReference>
<dbReference type="Ensembl" id="ENSSSCT00030070815.1">
    <property type="protein sequence ID" value="ENSSSCP00030032316.1"/>
    <property type="gene ID" value="ENSSSCG00030050793.1"/>
</dbReference>
<dbReference type="Ensembl" id="ENSSSCT00035020340.1">
    <property type="protein sequence ID" value="ENSSSCP00035007294.1"/>
    <property type="gene ID" value="ENSSSCG00035015939.1"/>
</dbReference>
<dbReference type="Ensembl" id="ENSSSCT00040033687.1">
    <property type="protein sequence ID" value="ENSSSCP00040013876.1"/>
    <property type="gene ID" value="ENSSSCG00040025138.1"/>
</dbReference>
<dbReference type="Ensembl" id="ENSSSCT00045051304.1">
    <property type="protein sequence ID" value="ENSSSCP00045035669.1"/>
    <property type="gene ID" value="ENSSSCG00045030089.1"/>
</dbReference>
<dbReference type="Ensembl" id="ENSSSCT00050068239.1">
    <property type="protein sequence ID" value="ENSSSCP00050029270.1"/>
    <property type="gene ID" value="ENSSSCG00050050152.1"/>
</dbReference>
<dbReference type="Ensembl" id="ENSSSCT00055059196.1">
    <property type="protein sequence ID" value="ENSSSCP00055047411.1"/>
    <property type="gene ID" value="ENSSSCG00055029732.1"/>
</dbReference>
<dbReference type="Ensembl" id="ENSSSCT00055059233.1">
    <property type="protein sequence ID" value="ENSSSCP00055047437.1"/>
    <property type="gene ID" value="ENSSSCG00055029732.1"/>
</dbReference>
<dbReference type="Ensembl" id="ENSSSCT00055059274.1">
    <property type="protein sequence ID" value="ENSSSCP00055047468.1"/>
    <property type="gene ID" value="ENSSSCG00055029732.1"/>
</dbReference>
<dbReference type="Ensembl" id="ENSSSCT00060108766.1">
    <property type="protein sequence ID" value="ENSSSCP00060048546.1"/>
    <property type="gene ID" value="ENSSSCG00060078654.1"/>
</dbReference>
<dbReference type="Ensembl" id="ENSSSCT00065010782.1">
    <property type="protein sequence ID" value="ENSSSCP00065004483.1"/>
    <property type="gene ID" value="ENSSSCG00065008022.1"/>
</dbReference>
<dbReference type="Ensembl" id="ENSSSCT00070009498.1">
    <property type="protein sequence ID" value="ENSSSCP00070007790.1"/>
    <property type="gene ID" value="ENSSSCG00070005001.1"/>
</dbReference>
<dbReference type="Ensembl" id="ENSSSCT00070010044.1">
    <property type="protein sequence ID" value="ENSSSCP00070008247.1"/>
    <property type="gene ID" value="ENSSSCG00070005001.1"/>
</dbReference>
<dbReference type="Ensembl" id="ENSSSCT00085013024">
    <property type="protein sequence ID" value="ENSSSCP00085009478"/>
    <property type="gene ID" value="ENSSSCG00085006860"/>
</dbReference>
<dbReference type="Ensembl" id="ENSSSCT00115006875">
    <property type="protein sequence ID" value="ENSSSCP00115006453"/>
    <property type="gene ID" value="ENSSSCG00115004008"/>
</dbReference>
<dbReference type="GeneID" id="414852"/>
<dbReference type="KEGG" id="ssc:414852"/>
<dbReference type="CTD" id="9500"/>
<dbReference type="VGNC" id="VGNC:89952">
    <property type="gene designation" value="MAGED1"/>
</dbReference>
<dbReference type="eggNOG" id="KOG4562">
    <property type="taxonomic scope" value="Eukaryota"/>
</dbReference>
<dbReference type="GeneTree" id="ENSGT00940000162070"/>
<dbReference type="HOGENOM" id="CLU_394113_0_0_1"/>
<dbReference type="InParanoid" id="Q6ITT4"/>
<dbReference type="OrthoDB" id="205198at2759"/>
<dbReference type="TreeFam" id="TF352132"/>
<dbReference type="Reactome" id="R-SSC-9768919">
    <property type="pathway name" value="NPAS4 regulates expression of target genes"/>
</dbReference>
<dbReference type="Proteomes" id="UP000008227">
    <property type="component" value="Chromosome X"/>
</dbReference>
<dbReference type="Proteomes" id="UP000314985">
    <property type="component" value="Unassembled WGS sequence"/>
</dbReference>
<dbReference type="Proteomes" id="UP000694570">
    <property type="component" value="Unplaced"/>
</dbReference>
<dbReference type="Proteomes" id="UP000694571">
    <property type="component" value="Unplaced"/>
</dbReference>
<dbReference type="Proteomes" id="UP000694720">
    <property type="component" value="Unplaced"/>
</dbReference>
<dbReference type="Proteomes" id="UP000694722">
    <property type="component" value="Unplaced"/>
</dbReference>
<dbReference type="Proteomes" id="UP000694723">
    <property type="component" value="Unplaced"/>
</dbReference>
<dbReference type="Proteomes" id="UP000694724">
    <property type="component" value="Unplaced"/>
</dbReference>
<dbReference type="Proteomes" id="UP000694725">
    <property type="component" value="Unplaced"/>
</dbReference>
<dbReference type="Proteomes" id="UP000694726">
    <property type="component" value="Unplaced"/>
</dbReference>
<dbReference type="Proteomes" id="UP000694727">
    <property type="component" value="Unplaced"/>
</dbReference>
<dbReference type="Proteomes" id="UP000694728">
    <property type="component" value="Unplaced"/>
</dbReference>
<dbReference type="GO" id="GO:0000785">
    <property type="term" value="C:chromatin"/>
    <property type="evidence" value="ECO:0000250"/>
    <property type="project" value="UniProtKB"/>
</dbReference>
<dbReference type="GO" id="GO:0005737">
    <property type="term" value="C:cytoplasm"/>
    <property type="evidence" value="ECO:0007669"/>
    <property type="project" value="UniProtKB-SubCell"/>
</dbReference>
<dbReference type="GO" id="GO:0005634">
    <property type="term" value="C:nucleus"/>
    <property type="evidence" value="ECO:0000250"/>
    <property type="project" value="UniProtKB"/>
</dbReference>
<dbReference type="GO" id="GO:0005886">
    <property type="term" value="C:plasma membrane"/>
    <property type="evidence" value="ECO:0007669"/>
    <property type="project" value="UniProtKB-SubCell"/>
</dbReference>
<dbReference type="GO" id="GO:0032991">
    <property type="term" value="C:protein-containing complex"/>
    <property type="evidence" value="ECO:0007669"/>
    <property type="project" value="Ensembl"/>
</dbReference>
<dbReference type="GO" id="GO:0042802">
    <property type="term" value="F:identical protein binding"/>
    <property type="evidence" value="ECO:0007669"/>
    <property type="project" value="Ensembl"/>
</dbReference>
<dbReference type="GO" id="GO:0032922">
    <property type="term" value="P:circadian regulation of gene expression"/>
    <property type="evidence" value="ECO:0000250"/>
    <property type="project" value="UniProtKB"/>
</dbReference>
<dbReference type="GO" id="GO:0050680">
    <property type="term" value="P:negative regulation of epithelial cell proliferation"/>
    <property type="evidence" value="ECO:0007669"/>
    <property type="project" value="Ensembl"/>
</dbReference>
<dbReference type="FunFam" id="1.10.10.1200:FF:000001">
    <property type="entry name" value="Melanoma-associated antigen D1"/>
    <property type="match status" value="1"/>
</dbReference>
<dbReference type="FunFam" id="1.10.10.1210:FF:000001">
    <property type="entry name" value="melanoma-associated antigen D1"/>
    <property type="match status" value="1"/>
</dbReference>
<dbReference type="Gene3D" id="1.10.10.1200">
    <property type="entry name" value="MAGE homology domain, winged helix WH1 motif"/>
    <property type="match status" value="1"/>
</dbReference>
<dbReference type="Gene3D" id="1.10.10.1210">
    <property type="entry name" value="MAGE homology domain, winged helix WH2 motif"/>
    <property type="match status" value="1"/>
</dbReference>
<dbReference type="InterPro" id="IPR037445">
    <property type="entry name" value="MAGE"/>
</dbReference>
<dbReference type="InterPro" id="IPR041898">
    <property type="entry name" value="MAGE_WH1"/>
</dbReference>
<dbReference type="InterPro" id="IPR041899">
    <property type="entry name" value="MAGE_WH2"/>
</dbReference>
<dbReference type="InterPro" id="IPR002190">
    <property type="entry name" value="MHD_dom"/>
</dbReference>
<dbReference type="PANTHER" id="PTHR11736:SF28">
    <property type="entry name" value="MELANOMA-ASSOCIATED ANTIGEN D1"/>
    <property type="match status" value="1"/>
</dbReference>
<dbReference type="PANTHER" id="PTHR11736">
    <property type="entry name" value="MELANOMA-ASSOCIATED ANTIGEN MAGE ANTIGEN"/>
    <property type="match status" value="1"/>
</dbReference>
<dbReference type="Pfam" id="PF01454">
    <property type="entry name" value="MAGE"/>
    <property type="match status" value="1"/>
</dbReference>
<dbReference type="SMART" id="SM01373">
    <property type="entry name" value="MAGE"/>
    <property type="match status" value="1"/>
</dbReference>
<dbReference type="PROSITE" id="PS50838">
    <property type="entry name" value="MAGE"/>
    <property type="match status" value="1"/>
</dbReference>
<sequence length="784" mass="86533">MAQKMDCGAGLLGFQAEASVEDSTLLMQTLMEAIQISEAPPTNQATAAASGPNASPQSSQPPSANEVADIQALAAATKPKTAFKAQNATTKGPNAAYDFSQALNAKEIPSTPPTVAFKAPNAPSKGPNAAYDFSQAATTSELTAKPEMAFKAQNATTKVGPNATYNFSPSLNANEMVNTQPKTAFKAWNDTTKAPTAETQTQNINQAKMATSQADIEADPGPGICESDGAAAQTSADGSQAQNLESRTIIRGKRTRKINNLNVEESSSGDQRRAPLAPGTWRSAPVPITTQSPPGAPPNVLWQTPLAWQNPSGWQNQPARQTPPARQSPPARQTPPAWQNPVAWQNPVIWPNPVIWQNPVIWPNPIVWPGPVVWPNPLAWQNPPGWQTPPGWQTPPGWQGPPDWQGPPDWPLPPDWPLPPDWPLPTDWPLPPDWIPTDWPVPPDWQNLRPSPNLRPSPNSRASQNLGASQPRDVALLQERANKLVKYLMLKDYTKVPIKRSEMLRDIIREYTDVYPEIIERACFVLEKKFGIQLKEIDKEEHLYILISTPESLAGILGTTKDTPKLGLLLVILGVIFMNGNRASEAVLWEALRKMGLRPGVRHPLLGDLRKLLTYEFVKQKYLDYRRVPNSNPPEYEFLWGLRSYHETSKMKVLRFIAEVQKRDPRDWTAQFMEAADEALDALDAAAAEAEARAEARTRMGIGDEAVSGPWSWDDIEFELLTWDEEGDFGDPWSRIPFTFWARYHQNARSRFPQTFAGPIIGPGGTASANFAANFGAIGFFWVE</sequence>
<protein>
    <recommendedName>
        <fullName>Melanoma-associated antigen D1</fullName>
    </recommendedName>
    <alternativeName>
        <fullName>MAGE-D1 antigen</fullName>
    </alternativeName>
</protein>
<feature type="chain" id="PRO_0000156725" description="Melanoma-associated antigen D1">
    <location>
        <begin position="1"/>
        <end position="784"/>
    </location>
</feature>
<feature type="repeat" description="1">
    <location>
        <begin position="302"/>
        <end position="307"/>
    </location>
</feature>
<feature type="repeat" description="2">
    <location>
        <begin position="308"/>
        <end position="313"/>
    </location>
</feature>
<feature type="repeat" description="3">
    <location>
        <begin position="314"/>
        <end position="319"/>
    </location>
</feature>
<feature type="repeat" description="4">
    <location>
        <begin position="338"/>
        <end position="343"/>
    </location>
</feature>
<feature type="repeat" description="5">
    <location>
        <begin position="344"/>
        <end position="349"/>
    </location>
</feature>
<feature type="repeat" description="6">
    <location>
        <begin position="350"/>
        <end position="355"/>
    </location>
</feature>
<feature type="repeat" description="7">
    <location>
        <begin position="356"/>
        <end position="361"/>
    </location>
</feature>
<feature type="repeat" description="8">
    <location>
        <begin position="362"/>
        <end position="367"/>
    </location>
</feature>
<feature type="repeat" description="9">
    <location>
        <begin position="368"/>
        <end position="373"/>
    </location>
</feature>
<feature type="repeat" description="10">
    <location>
        <begin position="374"/>
        <end position="379"/>
    </location>
</feature>
<feature type="repeat" description="11">
    <location>
        <begin position="380"/>
        <end position="385"/>
    </location>
</feature>
<feature type="repeat" description="12">
    <location>
        <begin position="386"/>
        <end position="391"/>
    </location>
</feature>
<feature type="repeat" description="13">
    <location>
        <begin position="392"/>
        <end position="397"/>
    </location>
</feature>
<feature type="repeat" description="14">
    <location>
        <begin position="398"/>
        <end position="403"/>
    </location>
</feature>
<feature type="repeat" description="15">
    <location>
        <begin position="404"/>
        <end position="409"/>
    </location>
</feature>
<feature type="repeat" description="16">
    <location>
        <begin position="410"/>
        <end position="415"/>
    </location>
</feature>
<feature type="repeat" description="17">
    <location>
        <begin position="416"/>
        <end position="421"/>
    </location>
</feature>
<feature type="repeat" description="18">
    <location>
        <begin position="422"/>
        <end position="427"/>
    </location>
</feature>
<feature type="repeat" description="19">
    <location>
        <begin position="428"/>
        <end position="433"/>
    </location>
</feature>
<feature type="repeat" description="20; approximate">
    <location>
        <begin position="434"/>
        <end position="438"/>
    </location>
</feature>
<feature type="repeat" description="21">
    <location>
        <begin position="439"/>
        <end position="444"/>
    </location>
</feature>
<feature type="repeat" description="22">
    <location>
        <begin position="445"/>
        <end position="450"/>
    </location>
</feature>
<feature type="domain" description="MAGE" evidence="3">
    <location>
        <begin position="477"/>
        <end position="675"/>
    </location>
</feature>
<feature type="region of interest" description="Disordered" evidence="4">
    <location>
        <begin position="41"/>
        <end position="67"/>
    </location>
</feature>
<feature type="region of interest" description="Disordered" evidence="4">
    <location>
        <begin position="195"/>
        <end position="339"/>
    </location>
</feature>
<feature type="region of interest" description="22 X 6 AA tandem repeats of W-[PQ]-X-P-X-X">
    <location>
        <begin position="302"/>
        <end position="450"/>
    </location>
</feature>
<feature type="region of interest" description="Disordered" evidence="4">
    <location>
        <begin position="379"/>
        <end position="418"/>
    </location>
</feature>
<feature type="region of interest" description="Disordered" evidence="4">
    <location>
        <begin position="441"/>
        <end position="471"/>
    </location>
</feature>
<feature type="compositionally biased region" description="Low complexity" evidence="4">
    <location>
        <begin position="47"/>
        <end position="65"/>
    </location>
</feature>
<feature type="compositionally biased region" description="Polar residues" evidence="4">
    <location>
        <begin position="195"/>
        <end position="214"/>
    </location>
</feature>
<feature type="compositionally biased region" description="Polar residues" evidence="4">
    <location>
        <begin position="232"/>
        <end position="246"/>
    </location>
</feature>
<feature type="compositionally biased region" description="Polar residues" evidence="4">
    <location>
        <begin position="259"/>
        <end position="269"/>
    </location>
</feature>
<feature type="compositionally biased region" description="Polar residues" evidence="4">
    <location>
        <begin position="306"/>
        <end position="320"/>
    </location>
</feature>
<feature type="compositionally biased region" description="Low complexity" evidence="4">
    <location>
        <begin position="383"/>
        <end position="403"/>
    </location>
</feature>
<feature type="compositionally biased region" description="Pro residues" evidence="4">
    <location>
        <begin position="404"/>
        <end position="418"/>
    </location>
</feature>
<feature type="compositionally biased region" description="Low complexity" evidence="4">
    <location>
        <begin position="447"/>
        <end position="461"/>
    </location>
</feature>
<feature type="modified residue" description="Phosphotyrosine" evidence="2">
    <location>
        <position position="97"/>
    </location>
</feature>
<gene>
    <name type="primary">MAGED1</name>
</gene>